<feature type="chain" id="PRO_1000190701" description="Putative 4-diphosphocytidyl-2-C-methyl-D-erythritol kinase">
    <location>
        <begin position="1"/>
        <end position="283"/>
    </location>
</feature>
<feature type="active site" evidence="1">
    <location>
        <position position="11"/>
    </location>
</feature>
<feature type="active site" evidence="1">
    <location>
        <position position="137"/>
    </location>
</feature>
<feature type="binding site" evidence="1">
    <location>
        <begin position="95"/>
        <end position="105"/>
    </location>
    <ligand>
        <name>ATP</name>
        <dbReference type="ChEBI" id="CHEBI:30616"/>
    </ligand>
</feature>
<comment type="function">
    <text evidence="1">Catalyzes the phosphorylation of the position 2 hydroxy group of 4-diphosphocytidyl-2C-methyl-D-erythritol.</text>
</comment>
<comment type="catalytic activity">
    <reaction evidence="1">
        <text>4-CDP-2-C-methyl-D-erythritol + ATP = 4-CDP-2-C-methyl-D-erythritol 2-phosphate + ADP + H(+)</text>
        <dbReference type="Rhea" id="RHEA:18437"/>
        <dbReference type="ChEBI" id="CHEBI:15378"/>
        <dbReference type="ChEBI" id="CHEBI:30616"/>
        <dbReference type="ChEBI" id="CHEBI:57823"/>
        <dbReference type="ChEBI" id="CHEBI:57919"/>
        <dbReference type="ChEBI" id="CHEBI:456216"/>
        <dbReference type="EC" id="2.7.1.148"/>
    </reaction>
</comment>
<comment type="similarity">
    <text evidence="1">Belongs to the GHMP kinase family. IspE subfamily.</text>
</comment>
<proteinExistence type="inferred from homology"/>
<organism>
    <name type="scientific">Streptococcus equi subsp. equi (strain 4047)</name>
    <dbReference type="NCBI Taxonomy" id="553482"/>
    <lineage>
        <taxon>Bacteria</taxon>
        <taxon>Bacillati</taxon>
        <taxon>Bacillota</taxon>
        <taxon>Bacilli</taxon>
        <taxon>Lactobacillales</taxon>
        <taxon>Streptococcaceae</taxon>
        <taxon>Streptococcus</taxon>
    </lineage>
</organism>
<protein>
    <recommendedName>
        <fullName evidence="1">Putative 4-diphosphocytidyl-2-C-methyl-D-erythritol kinase</fullName>
        <shortName evidence="1">CMK</shortName>
        <ecNumber evidence="1">2.7.1.148</ecNumber>
    </recommendedName>
    <alternativeName>
        <fullName evidence="1">4-(cytidine-5'-diphospho)-2-C-methyl-D-erythritol kinase</fullName>
    </alternativeName>
</protein>
<gene>
    <name type="ordered locus">SEQ_0092</name>
</gene>
<reference key="1">
    <citation type="journal article" date="2009" name="PLoS Pathog.">
        <title>Genomic evidence for the evolution of Streptococcus equi: host restriction, increased virulence, and genetic exchange with human pathogens.</title>
        <authorList>
            <person name="Holden M.T.G."/>
            <person name="Heather Z."/>
            <person name="Paillot R."/>
            <person name="Steward K.F."/>
            <person name="Webb K."/>
            <person name="Ainslie F."/>
            <person name="Jourdan T."/>
            <person name="Bason N.C."/>
            <person name="Holroyd N.E."/>
            <person name="Mungall K."/>
            <person name="Quail M.A."/>
            <person name="Sanders M."/>
            <person name="Simmonds M."/>
            <person name="Willey D."/>
            <person name="Brooks K."/>
            <person name="Aanensen D.M."/>
            <person name="Spratt B.G."/>
            <person name="Jolley K.A."/>
            <person name="Maiden M.C.J."/>
            <person name="Kehoe M."/>
            <person name="Chanter N."/>
            <person name="Bentley S.D."/>
            <person name="Robinson C."/>
            <person name="Maskell D.J."/>
            <person name="Parkhill J."/>
            <person name="Waller A.S."/>
        </authorList>
    </citation>
    <scope>NUCLEOTIDE SEQUENCE [LARGE SCALE GENOMIC DNA]</scope>
    <source>
        <strain>4047</strain>
    </source>
</reference>
<sequence>MTAIIERAPAKINLGLDIQGKRPDGYHDLSMVLVSVDLCDYITVDHLEEDRILLTSNCPRLPINEHNDVYKAAYLLKERFQISTGVSIFLDKRVPVCAGMGGGSSDAAAAIRALNQLWQLKLSPRQMIDIGMQIGSDVPYCLFAGCAQVTGKGEVVKPINGRLSSWVVLVKPEFGISTRTIFWDIDCETISRVPIEDLVSAIEAGDYQRLLATMGNSLEDISIAKRPFIQKVKDKMLQSGADIALMTGSGPTVFALCQTEKQANRVVNSLKGFCKEVYKVRTL</sequence>
<name>ISPE_STRE4</name>
<accession>C0MBI2</accession>
<keyword id="KW-0067">ATP-binding</keyword>
<keyword id="KW-0418">Kinase</keyword>
<keyword id="KW-0547">Nucleotide-binding</keyword>
<keyword id="KW-0808">Transferase</keyword>
<dbReference type="EC" id="2.7.1.148" evidence="1"/>
<dbReference type="EMBL" id="FM204883">
    <property type="protein sequence ID" value="CAW92029.1"/>
    <property type="molecule type" value="Genomic_DNA"/>
</dbReference>
<dbReference type="SMR" id="C0MBI2"/>
<dbReference type="KEGG" id="seu:SEQ_0092"/>
<dbReference type="HOGENOM" id="CLU_053057_1_1_9"/>
<dbReference type="OrthoDB" id="9809438at2"/>
<dbReference type="Proteomes" id="UP000001365">
    <property type="component" value="Chromosome"/>
</dbReference>
<dbReference type="GO" id="GO:0050515">
    <property type="term" value="F:4-(cytidine 5'-diphospho)-2-C-methyl-D-erythritol kinase activity"/>
    <property type="evidence" value="ECO:0007669"/>
    <property type="project" value="UniProtKB-UniRule"/>
</dbReference>
<dbReference type="GO" id="GO:0005524">
    <property type="term" value="F:ATP binding"/>
    <property type="evidence" value="ECO:0007669"/>
    <property type="project" value="UniProtKB-UniRule"/>
</dbReference>
<dbReference type="GO" id="GO:0016114">
    <property type="term" value="P:terpenoid biosynthetic process"/>
    <property type="evidence" value="ECO:0007669"/>
    <property type="project" value="InterPro"/>
</dbReference>
<dbReference type="Gene3D" id="3.30.230.10">
    <property type="match status" value="1"/>
</dbReference>
<dbReference type="Gene3D" id="3.30.70.890">
    <property type="entry name" value="GHMP kinase, C-terminal domain"/>
    <property type="match status" value="1"/>
</dbReference>
<dbReference type="HAMAP" id="MF_00061">
    <property type="entry name" value="IspE"/>
    <property type="match status" value="1"/>
</dbReference>
<dbReference type="InterPro" id="IPR013750">
    <property type="entry name" value="GHMP_kinase_C_dom"/>
</dbReference>
<dbReference type="InterPro" id="IPR036554">
    <property type="entry name" value="GHMP_kinase_C_sf"/>
</dbReference>
<dbReference type="InterPro" id="IPR006204">
    <property type="entry name" value="GHMP_kinase_N_dom"/>
</dbReference>
<dbReference type="InterPro" id="IPR004424">
    <property type="entry name" value="IspE"/>
</dbReference>
<dbReference type="InterPro" id="IPR020568">
    <property type="entry name" value="Ribosomal_Su5_D2-typ_SF"/>
</dbReference>
<dbReference type="InterPro" id="IPR014721">
    <property type="entry name" value="Ribsml_uS5_D2-typ_fold_subgr"/>
</dbReference>
<dbReference type="NCBIfam" id="TIGR00154">
    <property type="entry name" value="ispE"/>
    <property type="match status" value="1"/>
</dbReference>
<dbReference type="NCBIfam" id="NF011202">
    <property type="entry name" value="PRK14608.1"/>
    <property type="match status" value="1"/>
</dbReference>
<dbReference type="PANTHER" id="PTHR43527">
    <property type="entry name" value="4-DIPHOSPHOCYTIDYL-2-C-METHYL-D-ERYTHRITOL KINASE, CHLOROPLASTIC"/>
    <property type="match status" value="1"/>
</dbReference>
<dbReference type="PANTHER" id="PTHR43527:SF2">
    <property type="entry name" value="4-DIPHOSPHOCYTIDYL-2-C-METHYL-D-ERYTHRITOL KINASE, CHLOROPLASTIC"/>
    <property type="match status" value="1"/>
</dbReference>
<dbReference type="Pfam" id="PF08544">
    <property type="entry name" value="GHMP_kinases_C"/>
    <property type="match status" value="1"/>
</dbReference>
<dbReference type="Pfam" id="PF00288">
    <property type="entry name" value="GHMP_kinases_N"/>
    <property type="match status" value="1"/>
</dbReference>
<dbReference type="PIRSF" id="PIRSF010376">
    <property type="entry name" value="IspE"/>
    <property type="match status" value="1"/>
</dbReference>
<dbReference type="PRINTS" id="PR00958">
    <property type="entry name" value="HOMSERKINASE"/>
</dbReference>
<dbReference type="SUPFAM" id="SSF55060">
    <property type="entry name" value="GHMP Kinase, C-terminal domain"/>
    <property type="match status" value="1"/>
</dbReference>
<dbReference type="SUPFAM" id="SSF54211">
    <property type="entry name" value="Ribosomal protein S5 domain 2-like"/>
    <property type="match status" value="1"/>
</dbReference>
<evidence type="ECO:0000255" key="1">
    <source>
        <dbReference type="HAMAP-Rule" id="MF_00061"/>
    </source>
</evidence>